<dbReference type="EMBL" id="X13480">
    <property type="protein sequence ID" value="CAA31831.1"/>
    <property type="molecule type" value="mRNA"/>
</dbReference>
<dbReference type="PIR" id="A34040">
    <property type="entry name" value="VHNZMH"/>
</dbReference>
<dbReference type="PDB" id="4UFT">
    <property type="method" value="EM"/>
    <property type="resolution" value="4.30 A"/>
    <property type="chains" value="B=1-391"/>
</dbReference>
<dbReference type="PDBsum" id="4UFT"/>
<dbReference type="EMDB" id="EMD-2867"/>
<dbReference type="SMR" id="P10050"/>
<dbReference type="DIP" id="DIP-61650N"/>
<dbReference type="EvolutionaryTrace" id="P10050"/>
<dbReference type="GO" id="GO:0019029">
    <property type="term" value="C:helical viral capsid"/>
    <property type="evidence" value="ECO:0007669"/>
    <property type="project" value="UniProtKB-KW"/>
</dbReference>
<dbReference type="GO" id="GO:0030430">
    <property type="term" value="C:host cell cytoplasm"/>
    <property type="evidence" value="ECO:0007669"/>
    <property type="project" value="UniProtKB-SubCell"/>
</dbReference>
<dbReference type="GO" id="GO:0042025">
    <property type="term" value="C:host cell nucleus"/>
    <property type="evidence" value="ECO:0007669"/>
    <property type="project" value="UniProtKB-SubCell"/>
</dbReference>
<dbReference type="GO" id="GO:1990904">
    <property type="term" value="C:ribonucleoprotein complex"/>
    <property type="evidence" value="ECO:0007669"/>
    <property type="project" value="UniProtKB-KW"/>
</dbReference>
<dbReference type="GO" id="GO:0019013">
    <property type="term" value="C:viral nucleocapsid"/>
    <property type="evidence" value="ECO:0007669"/>
    <property type="project" value="UniProtKB-KW"/>
</dbReference>
<dbReference type="GO" id="GO:0003723">
    <property type="term" value="F:RNA binding"/>
    <property type="evidence" value="ECO:0007669"/>
    <property type="project" value="UniProtKB-KW"/>
</dbReference>
<dbReference type="GO" id="GO:0005198">
    <property type="term" value="F:structural molecule activity"/>
    <property type="evidence" value="ECO:0007669"/>
    <property type="project" value="InterPro"/>
</dbReference>
<dbReference type="InterPro" id="IPR002021">
    <property type="entry name" value="Paramyx_ncap"/>
</dbReference>
<dbReference type="Pfam" id="PF00973">
    <property type="entry name" value="Paramyxo_ncap"/>
    <property type="match status" value="1"/>
</dbReference>
<organismHost>
    <name type="scientific">Homo sapiens</name>
    <name type="common">Human</name>
    <dbReference type="NCBI Taxonomy" id="9606"/>
</organismHost>
<proteinExistence type="evidence at protein level"/>
<organism>
    <name type="scientific">Measles virus (strain Halle)</name>
    <name type="common">MeV</name>
    <name type="synonym">Subacute sclerose panencephalitis virus</name>
    <dbReference type="NCBI Taxonomy" id="11236"/>
    <lineage>
        <taxon>Viruses</taxon>
        <taxon>Riboviria</taxon>
        <taxon>Orthornavirae</taxon>
        <taxon>Negarnaviricota</taxon>
        <taxon>Haploviricotina</taxon>
        <taxon>Monjiviricetes</taxon>
        <taxon>Mononegavirales</taxon>
        <taxon>Paramyxoviridae</taxon>
        <taxon>Orthoparamyxovirinae</taxon>
        <taxon>Morbillivirus</taxon>
        <taxon>Morbillivirus hominis</taxon>
        <taxon>Measles morbillivirus</taxon>
    </lineage>
</organism>
<protein>
    <recommendedName>
        <fullName>Nucleoprotein</fullName>
    </recommendedName>
    <alternativeName>
        <fullName>Nucleocapsid protein</fullName>
        <shortName>NP</shortName>
        <shortName>Protein N</shortName>
    </alternativeName>
</protein>
<sequence length="525" mass="58160">MATLLRSLALFKRNKDKPPITSGSGGAIRGIKHIIIVPIPGDSSITTRSRLLDRLVRLIGNPDVSGPKLTGALIGILSLFVESPGQLIQRITDDPDVSIRLLEVVQSDQSQSGLTFASRGTNMEDEADQYFSHDDPISSDQSRFGWFENKEISDIEVQDPEGFNMILGTILAQIWVLVAKAVTAPDTAADSELRRWIKYTQQRRVVGEFRLERKWLDVVRNRIAEDLSLRRFMVALILDIKRTPGNKPRIAEMICNIDTYIVEAGLASFILTIKFGIETMYPALGLHEFDGELSTLESLMNLYQQMGETAPYMVILENSIQNKFSAGSYPLLWSYAMGVGVELENSMGGLNFGRSYFDPAYFRLGQEMVRRSAGKVSSTLASELGITAEDARLVSEIAMHTTEDKISRAVGPRQAQVSFLHGDQSENELPRLGGKEDRRVKQSRGEARESYRETGPSRASDARAAHLPTGTPLDIDTASESSQDPQDSRRSADALLRLQAMAGISEEQGSDTDTPIVYNDRNLLD</sequence>
<evidence type="ECO:0000250" key="1">
    <source>
        <dbReference type="UniProtKB" id="O57286"/>
    </source>
</evidence>
<evidence type="ECO:0000250" key="2">
    <source>
        <dbReference type="UniProtKB" id="P04851"/>
    </source>
</evidence>
<evidence type="ECO:0000250" key="3">
    <source>
        <dbReference type="UniProtKB" id="P06159"/>
    </source>
</evidence>
<evidence type="ECO:0000250" key="4">
    <source>
        <dbReference type="UniProtKB" id="P0DXN6"/>
    </source>
</evidence>
<evidence type="ECO:0000250" key="5">
    <source>
        <dbReference type="UniProtKB" id="Q07097"/>
    </source>
</evidence>
<evidence type="ECO:0000250" key="6">
    <source>
        <dbReference type="UniProtKB" id="Q77M43"/>
    </source>
</evidence>
<evidence type="ECO:0000250" key="7">
    <source>
        <dbReference type="UniProtKB" id="Q89933"/>
    </source>
</evidence>
<evidence type="ECO:0000250" key="8">
    <source>
        <dbReference type="UniProtKB" id="Q9WMB5"/>
    </source>
</evidence>
<evidence type="ECO:0000256" key="9">
    <source>
        <dbReference type="SAM" id="MobiDB-lite"/>
    </source>
</evidence>
<evidence type="ECO:0000269" key="10">
    <source>
    </source>
</evidence>
<evidence type="ECO:0000305" key="11"/>
<evidence type="ECO:0000305" key="12">
    <source>
    </source>
</evidence>
<reference key="1">
    <citation type="journal article" date="1988" name="Nucleic Acids Res.">
        <title>Cloning and sequencing of the nucleoprotein gene of measles virus (Halle strain).</title>
        <authorList>
            <person name="Buckland R."/>
            <person name="Gerald C."/>
            <person name="Barker D."/>
            <person name="Wild F."/>
        </authorList>
    </citation>
    <scope>NUCLEOTIDE SEQUENCE [MRNA]</scope>
</reference>
<reference key="2">
    <citation type="journal article" date="2004" name="J. Mol. Biol.">
        <title>The 12 A structure of trypsin-treated measles virus N-RNA.</title>
        <authorList>
            <person name="Schoehn G."/>
            <person name="Mavrakis M."/>
            <person name="Albertini A."/>
            <person name="Wade R."/>
            <person name="Hoenger A."/>
            <person name="Ruigrok R.W."/>
        </authorList>
    </citation>
    <scope>3D-STRUCTURE</scope>
    <scope>ELECTRON MICROSCOPY</scope>
</reference>
<reference key="3">
    <citation type="journal article" date="2015" name="Science">
        <title>Structural virology. Near-atomic cryo-EM structure of the helical measles virus nucleocapsid.</title>
        <authorList>
            <person name="Gutsche I."/>
            <person name="Desfosses A."/>
            <person name="Effantin G."/>
            <person name="Ling W.L."/>
            <person name="Haupt M."/>
            <person name="Ruigrok R.W."/>
            <person name="Sachse C."/>
            <person name="Schoehn G."/>
        </authorList>
    </citation>
    <scope>STRUCTURE BY ELECTRON MICROSCOPY (4.30 ANGSTROMS) OF 1-391 IN COMPLEX WITH RNA</scope>
    <scope>RNA-BINDING</scope>
    <scope>FUNCTION</scope>
    <scope>DOMAIN</scope>
</reference>
<keyword id="KW-0002">3D-structure</keyword>
<keyword id="KW-0167">Capsid protein</keyword>
<keyword id="KW-1139">Helical capsid protein</keyword>
<keyword id="KW-1035">Host cytoplasm</keyword>
<keyword id="KW-1048">Host nucleus</keyword>
<keyword id="KW-0945">Host-virus interaction</keyword>
<keyword id="KW-0597">Phosphoprotein</keyword>
<keyword id="KW-0687">Ribonucleoprotein</keyword>
<keyword id="KW-0694">RNA-binding</keyword>
<keyword id="KW-0543">Viral nucleoprotein</keyword>
<keyword id="KW-0946">Virion</keyword>
<name>NCAP_MEASH</name>
<accession>P10050</accession>
<comment type="function">
    <text evidence="3 4 8 10 12">Forms the helical nucleocapsid (NC) in a ratio of 1 N per 6 ribonucleotides, protecting the genome from nucleases (PubMed:25883315). The nucleocapsid (NC) has a helical structure with either 12.35 or 11.64 N per turn, approximately 20 nm in diameter, with a hollow central cavity approximately 5 nm in diameter (Probable). The encapsidated genomic RNA serves as template for transcription and replication; encapsidation by N is coupled to RNA synthesis (By similarity). Forms the encapsidation complex with the phosphoprotein protein P. Before encapsidation, the newly synthesized free N protein, so-called N0, is chaperoned by P (By similarity). Participates, together with P, in the formation of viral factories (viroplasms), which are large inclusions in the host cytoplasm where replication takes place (By similarity). N is released in the blood following lysis of measles infected cells, it interacts then with human FCGR2B on immune cells, inducing apoptosis and blocking inflammatory immune response (By similarity).</text>
</comment>
<comment type="subunit">
    <text evidence="1 3 4 5 6 7 8">Homomultimer; forms the nucleocapsid (By similarity). Binds to viral genomic RNA (By similarity). N0 interacts (via Ncore) with the phosphoprotein (via N-terminus); this interaction allows P to chaperon N0 to avoid N polymerization and non-specific RNA binding before encapsidation (By similarity). Interacts (via the Ntail) as N-RNA template with the phosphoprotein (via C-terminus XD); this interaction maintains the P/L complex anchored to the nucleocapsid template during the sequential transcription (By similarity). Interacts with the phosphoprotein; this interaction leads to the formation of membraneless organelles that function as viral replication factories (By similarity). Interacts with human FCGR2B protein (By similarity). Ntail binds to a protein on human thymic epithelial cells, termed Nucleoprotein Receptor (NR), inducing growth arrest (By similarity). Interacts with human PPIA/CYPA and PPIB/CYPB (By similarity).</text>
</comment>
<comment type="subcellular location">
    <subcellularLocation>
        <location evidence="2">Virion</location>
    </subcellularLocation>
    <subcellularLocation>
        <location evidence="2">Host cytoplasm</location>
    </subcellularLocation>
    <subcellularLocation>
        <location evidence="2">Host nucleus</location>
    </subcellularLocation>
</comment>
<comment type="domain">
    <text evidence="7">Ncore is globular and carries regions required for N self-assembly and RNA-binding. Ntail is an intrinsically disordered monomeric domain in the C-terminus.</text>
</comment>
<comment type="PTM">
    <text evidence="8">Phosphorylation at Thr-279 is required for the formation of the nucleocapsid.</text>
</comment>
<comment type="similarity">
    <text evidence="11">Belongs to the paramyxoviruses nucleocapsid family.</text>
</comment>
<gene>
    <name type="primary">N</name>
    <name type="synonym">NP</name>
</gene>
<feature type="chain" id="PRO_0000142656" description="Nucleoprotein">
    <location>
        <begin position="1"/>
        <end position="525"/>
    </location>
</feature>
<feature type="region of interest" description="Ncore" evidence="10">
    <location>
        <begin position="1"/>
        <end position="403"/>
    </location>
</feature>
<feature type="region of interest" description="RNA packaging and organization of the helical nucleocapsid" evidence="7">
    <location>
        <begin position="1"/>
        <end position="375"/>
    </location>
</feature>
<feature type="region of interest" description="Homomultimerization" evidence="10">
    <location>
        <begin position="1"/>
        <end position="36"/>
    </location>
</feature>
<feature type="region of interest" description="Homomultimerization" evidence="10">
    <location>
        <begin position="373"/>
        <end position="391"/>
    </location>
</feature>
<feature type="region of interest" description="Ntail" evidence="3">
    <location>
        <begin position="401"/>
        <end position="525"/>
    </location>
</feature>
<feature type="region of interest" description="Ntail" evidence="3">
    <location>
        <begin position="404"/>
        <end position="525"/>
    </location>
</feature>
<feature type="region of interest" description="Disordered" evidence="9">
    <location>
        <begin position="418"/>
        <end position="525"/>
    </location>
</feature>
<feature type="region of interest" description="Interaction with the phosphoprotein" evidence="6">
    <location>
        <begin position="477"/>
        <end position="505"/>
    </location>
</feature>
<feature type="short sequence motif" description="Nuclear localization signal" evidence="2">
    <location>
        <begin position="70"/>
        <end position="77"/>
    </location>
</feature>
<feature type="short sequence motif" description="Nuclear export signal" evidence="2">
    <location>
        <begin position="425"/>
        <end position="440"/>
    </location>
</feature>
<feature type="compositionally biased region" description="Basic and acidic residues" evidence="9">
    <location>
        <begin position="433"/>
        <end position="452"/>
    </location>
</feature>
<feature type="binding site" evidence="12">
    <location>
        <position position="180"/>
    </location>
    <ligand>
        <name>RNA</name>
        <dbReference type="ChEBI" id="CHEBI:33697"/>
    </ligand>
</feature>
<feature type="binding site" evidence="12">
    <location>
        <position position="195"/>
    </location>
    <ligand>
        <name>RNA</name>
        <dbReference type="ChEBI" id="CHEBI:33697"/>
    </ligand>
</feature>
<feature type="binding site" evidence="12">
    <location>
        <position position="202"/>
    </location>
    <ligand>
        <name>RNA</name>
        <dbReference type="ChEBI" id="CHEBI:33697"/>
    </ligand>
</feature>
<feature type="binding site" evidence="12">
    <location>
        <position position="260"/>
    </location>
    <ligand>
        <name>RNA</name>
        <dbReference type="ChEBI" id="CHEBI:33697"/>
    </ligand>
</feature>
<feature type="binding site" evidence="12">
    <location>
        <position position="351"/>
    </location>
    <ligand>
        <name>RNA</name>
        <dbReference type="ChEBI" id="CHEBI:33697"/>
    </ligand>
</feature>
<feature type="modified residue" description="Phosphothreonine; by host" evidence="8">
    <location>
        <position position="279"/>
    </location>
</feature>